<organism evidence="12">
    <name type="scientific">Drosophila melanogaster</name>
    <name type="common">Fruit fly</name>
    <dbReference type="NCBI Taxonomy" id="7227"/>
    <lineage>
        <taxon>Eukaryota</taxon>
        <taxon>Metazoa</taxon>
        <taxon>Ecdysozoa</taxon>
        <taxon>Arthropoda</taxon>
        <taxon>Hexapoda</taxon>
        <taxon>Insecta</taxon>
        <taxon>Pterygota</taxon>
        <taxon>Neoptera</taxon>
        <taxon>Endopterygota</taxon>
        <taxon>Diptera</taxon>
        <taxon>Brachycera</taxon>
        <taxon>Muscomorpha</taxon>
        <taxon>Ephydroidea</taxon>
        <taxon>Drosophilidae</taxon>
        <taxon>Drosophila</taxon>
        <taxon>Sophophora</taxon>
    </lineage>
</organism>
<dbReference type="EC" id="2.7.10.2"/>
<dbReference type="EMBL" id="U37773">
    <property type="protein sequence ID" value="AAA79851.1"/>
    <property type="molecule type" value="mRNA"/>
</dbReference>
<dbReference type="EMBL" id="AE013599">
    <property type="protein sequence ID" value="AAF58044.1"/>
    <property type="molecule type" value="Genomic_DNA"/>
</dbReference>
<dbReference type="EMBL" id="AY051937">
    <property type="protein sequence ID" value="AAK93361.1"/>
    <property type="molecule type" value="mRNA"/>
</dbReference>
<dbReference type="EMBL" id="S55982">
    <property type="protein sequence ID" value="AAB19909.1"/>
    <property type="molecule type" value="Genomic_DNA"/>
</dbReference>
<dbReference type="PIR" id="S18015">
    <property type="entry name" value="S18015"/>
</dbReference>
<dbReference type="RefSeq" id="NP_524743.2">
    <property type="nucleotide sequence ID" value="NM_080004.4"/>
</dbReference>
<dbReference type="SMR" id="Q24145"/>
<dbReference type="BioGRID" id="68999">
    <property type="interactions" value="3"/>
</dbReference>
<dbReference type="DIP" id="DIP-59843N"/>
<dbReference type="FunCoup" id="Q24145">
    <property type="interactions" value="186"/>
</dbReference>
<dbReference type="IntAct" id="Q24145">
    <property type="interactions" value="3"/>
</dbReference>
<dbReference type="STRING" id="7227.FBpp0086382"/>
<dbReference type="GlyGen" id="Q24145">
    <property type="glycosylation" value="3 sites"/>
</dbReference>
<dbReference type="PaxDb" id="7227-FBpp0086382"/>
<dbReference type="EnsemblMetazoa" id="FBtr0087244">
    <property type="protein sequence ID" value="FBpp0086382"/>
    <property type="gene ID" value="FBgn0015295"/>
</dbReference>
<dbReference type="GeneID" id="44353"/>
<dbReference type="KEGG" id="dme:Dmel_CG18247"/>
<dbReference type="AGR" id="FB:FBgn0015295"/>
<dbReference type="CTD" id="44353"/>
<dbReference type="FlyBase" id="FBgn0015295">
    <property type="gene designation" value="Shark"/>
</dbReference>
<dbReference type="VEuPathDB" id="VectorBase:FBgn0015295"/>
<dbReference type="eggNOG" id="KOG0197">
    <property type="taxonomic scope" value="Eukaryota"/>
</dbReference>
<dbReference type="GeneTree" id="ENSGT00940000167610"/>
<dbReference type="HOGENOM" id="CLU_000288_3_0_1"/>
<dbReference type="InParanoid" id="Q24145"/>
<dbReference type="OMA" id="RDPDYQN"/>
<dbReference type="OrthoDB" id="67310at2759"/>
<dbReference type="PhylomeDB" id="Q24145"/>
<dbReference type="BRENDA" id="2.7.10.2">
    <property type="organism ID" value="1994"/>
</dbReference>
<dbReference type="BioGRID-ORCS" id="44353">
    <property type="hits" value="0 hits in 3 CRISPR screens"/>
</dbReference>
<dbReference type="ChiTaRS" id="Shark">
    <property type="organism name" value="fly"/>
</dbReference>
<dbReference type="GenomeRNAi" id="44353"/>
<dbReference type="PRO" id="PR:Q24145"/>
<dbReference type="Proteomes" id="UP000000803">
    <property type="component" value="Chromosome 2R"/>
</dbReference>
<dbReference type="Bgee" id="FBgn0015295">
    <property type="expression patterns" value="Expressed in cleaving embryo and 59 other cell types or tissues"/>
</dbReference>
<dbReference type="ExpressionAtlas" id="Q24145">
    <property type="expression patterns" value="baseline and differential"/>
</dbReference>
<dbReference type="GO" id="GO:0005938">
    <property type="term" value="C:cell cortex"/>
    <property type="evidence" value="ECO:0000314"/>
    <property type="project" value="FlyBase"/>
</dbReference>
<dbReference type="GO" id="GO:0005737">
    <property type="term" value="C:cytoplasm"/>
    <property type="evidence" value="ECO:0000314"/>
    <property type="project" value="UniProtKB"/>
</dbReference>
<dbReference type="GO" id="GO:0005886">
    <property type="term" value="C:plasma membrane"/>
    <property type="evidence" value="ECO:0000318"/>
    <property type="project" value="GO_Central"/>
</dbReference>
<dbReference type="GO" id="GO:0005524">
    <property type="term" value="F:ATP binding"/>
    <property type="evidence" value="ECO:0007669"/>
    <property type="project" value="UniProtKB-KW"/>
</dbReference>
<dbReference type="GO" id="GO:0004715">
    <property type="term" value="F:non-membrane spanning protein tyrosine kinase activity"/>
    <property type="evidence" value="ECO:0000250"/>
    <property type="project" value="FlyBase"/>
</dbReference>
<dbReference type="GO" id="GO:0004713">
    <property type="term" value="F:protein tyrosine kinase activity"/>
    <property type="evidence" value="ECO:0000318"/>
    <property type="project" value="GO_Central"/>
</dbReference>
<dbReference type="GO" id="GO:0043277">
    <property type="term" value="P:apoptotic cell clearance"/>
    <property type="evidence" value="ECO:0000315"/>
    <property type="project" value="FlyBase"/>
</dbReference>
<dbReference type="GO" id="GO:0046843">
    <property type="term" value="P:dorsal appendage formation"/>
    <property type="evidence" value="ECO:0000315"/>
    <property type="project" value="FlyBase"/>
</dbReference>
<dbReference type="GO" id="GO:0007391">
    <property type="term" value="P:dorsal closure"/>
    <property type="evidence" value="ECO:0000304"/>
    <property type="project" value="FlyBase"/>
</dbReference>
<dbReference type="GO" id="GO:0007394">
    <property type="term" value="P:dorsal closure, elongation of leading edge cells"/>
    <property type="evidence" value="ECO:0000315"/>
    <property type="project" value="FlyBase"/>
</dbReference>
<dbReference type="GO" id="GO:0007306">
    <property type="term" value="P:egg chorion assembly"/>
    <property type="evidence" value="ECO:0000315"/>
    <property type="project" value="FlyBase"/>
</dbReference>
<dbReference type="GO" id="GO:0007254">
    <property type="term" value="P:JNK cascade"/>
    <property type="evidence" value="ECO:0000315"/>
    <property type="project" value="FlyBase"/>
</dbReference>
<dbReference type="GO" id="GO:0045199">
    <property type="term" value="P:maintenance of epithelial cell apical/basal polarity"/>
    <property type="evidence" value="ECO:0000270"/>
    <property type="project" value="UniProtKB"/>
</dbReference>
<dbReference type="CDD" id="cd05060">
    <property type="entry name" value="PTKc_Syk_like"/>
    <property type="match status" value="1"/>
</dbReference>
<dbReference type="CDD" id="cd10348">
    <property type="entry name" value="SH2_Cterm_shark_like"/>
    <property type="match status" value="1"/>
</dbReference>
<dbReference type="CDD" id="cd10347">
    <property type="entry name" value="SH2_Nterm_shark_like"/>
    <property type="match status" value="1"/>
</dbReference>
<dbReference type="FunFam" id="1.10.510.10:FF:000027">
    <property type="entry name" value="Receptor protein-tyrosine kinase"/>
    <property type="match status" value="1"/>
</dbReference>
<dbReference type="FunFam" id="1.25.40.20:FF:000578">
    <property type="entry name" value="Tyrosine-protein kinase"/>
    <property type="match status" value="1"/>
</dbReference>
<dbReference type="FunFam" id="3.30.505.10:FF:000102">
    <property type="entry name" value="Tyrosine-protein kinase"/>
    <property type="match status" value="1"/>
</dbReference>
<dbReference type="Gene3D" id="1.25.40.20">
    <property type="entry name" value="Ankyrin repeat-containing domain"/>
    <property type="match status" value="1"/>
</dbReference>
<dbReference type="Gene3D" id="3.30.200.20">
    <property type="entry name" value="Phosphorylase Kinase, domain 1"/>
    <property type="match status" value="1"/>
</dbReference>
<dbReference type="Gene3D" id="3.30.505.10">
    <property type="entry name" value="SH2 domain"/>
    <property type="match status" value="2"/>
</dbReference>
<dbReference type="Gene3D" id="1.10.510.10">
    <property type="entry name" value="Transferase(Phosphotransferase) domain 1"/>
    <property type="match status" value="1"/>
</dbReference>
<dbReference type="InterPro" id="IPR002110">
    <property type="entry name" value="Ankyrin_rpt"/>
</dbReference>
<dbReference type="InterPro" id="IPR036770">
    <property type="entry name" value="Ankyrin_rpt-contain_sf"/>
</dbReference>
<dbReference type="InterPro" id="IPR011009">
    <property type="entry name" value="Kinase-like_dom_sf"/>
</dbReference>
<dbReference type="InterPro" id="IPR050198">
    <property type="entry name" value="Non-receptor_tyrosine_kinases"/>
</dbReference>
<dbReference type="InterPro" id="IPR000719">
    <property type="entry name" value="Prot_kinase_dom"/>
</dbReference>
<dbReference type="InterPro" id="IPR017441">
    <property type="entry name" value="Protein_kinase_ATP_BS"/>
</dbReference>
<dbReference type="InterPro" id="IPR001245">
    <property type="entry name" value="Ser-Thr/Tyr_kinase_cat_dom"/>
</dbReference>
<dbReference type="InterPro" id="IPR000980">
    <property type="entry name" value="SH2"/>
</dbReference>
<dbReference type="InterPro" id="IPR036860">
    <property type="entry name" value="SH2_dom_sf"/>
</dbReference>
<dbReference type="InterPro" id="IPR035061">
    <property type="entry name" value="Shark-like_SH2_N"/>
</dbReference>
<dbReference type="InterPro" id="IPR008266">
    <property type="entry name" value="Tyr_kinase_AS"/>
</dbReference>
<dbReference type="InterPro" id="IPR020635">
    <property type="entry name" value="Tyr_kinase_cat_dom"/>
</dbReference>
<dbReference type="PANTHER" id="PTHR24418">
    <property type="entry name" value="TYROSINE-PROTEIN KINASE"/>
    <property type="match status" value="1"/>
</dbReference>
<dbReference type="Pfam" id="PF00023">
    <property type="entry name" value="Ank"/>
    <property type="match status" value="1"/>
</dbReference>
<dbReference type="Pfam" id="PF12796">
    <property type="entry name" value="Ank_2"/>
    <property type="match status" value="1"/>
</dbReference>
<dbReference type="Pfam" id="PF07714">
    <property type="entry name" value="PK_Tyr_Ser-Thr"/>
    <property type="match status" value="1"/>
</dbReference>
<dbReference type="Pfam" id="PF00017">
    <property type="entry name" value="SH2"/>
    <property type="match status" value="2"/>
</dbReference>
<dbReference type="PRINTS" id="PR00401">
    <property type="entry name" value="SH2DOMAIN"/>
</dbReference>
<dbReference type="PRINTS" id="PR00109">
    <property type="entry name" value="TYRKINASE"/>
</dbReference>
<dbReference type="SMART" id="SM00248">
    <property type="entry name" value="ANK"/>
    <property type="match status" value="4"/>
</dbReference>
<dbReference type="SMART" id="SM00252">
    <property type="entry name" value="SH2"/>
    <property type="match status" value="2"/>
</dbReference>
<dbReference type="SMART" id="SM00219">
    <property type="entry name" value="TyrKc"/>
    <property type="match status" value="1"/>
</dbReference>
<dbReference type="SUPFAM" id="SSF48403">
    <property type="entry name" value="Ankyrin repeat"/>
    <property type="match status" value="1"/>
</dbReference>
<dbReference type="SUPFAM" id="SSF56112">
    <property type="entry name" value="Protein kinase-like (PK-like)"/>
    <property type="match status" value="1"/>
</dbReference>
<dbReference type="SUPFAM" id="SSF55550">
    <property type="entry name" value="SH2 domain"/>
    <property type="match status" value="2"/>
</dbReference>
<dbReference type="PROSITE" id="PS50297">
    <property type="entry name" value="ANK_REP_REGION"/>
    <property type="match status" value="1"/>
</dbReference>
<dbReference type="PROSITE" id="PS50088">
    <property type="entry name" value="ANK_REPEAT"/>
    <property type="match status" value="3"/>
</dbReference>
<dbReference type="PROSITE" id="PS00107">
    <property type="entry name" value="PROTEIN_KINASE_ATP"/>
    <property type="match status" value="1"/>
</dbReference>
<dbReference type="PROSITE" id="PS50011">
    <property type="entry name" value="PROTEIN_KINASE_DOM"/>
    <property type="match status" value="1"/>
</dbReference>
<dbReference type="PROSITE" id="PS00109">
    <property type="entry name" value="PROTEIN_KINASE_TYR"/>
    <property type="match status" value="1"/>
</dbReference>
<dbReference type="PROSITE" id="PS50001">
    <property type="entry name" value="SH2"/>
    <property type="match status" value="2"/>
</dbReference>
<comment type="function">
    <text evidence="6 7 8">Following axon injury, required for recruitment of drpr and glial cells to severed axons and for glial clearance of severed axons from the central nervous system (PubMed:18432193). Together with Src42a and drpr, promotes the migration of macrophages to sites of wounding as part of a signaling cascade where Scr42a detects production of hydrogen peroxide at wound sites which triggers phosphorylation of drpr and subsequent recruitment and activation of shark (PubMed:26028435). May be involved in signal transduction on the apical surface of ectodermal epithelial cells, regulating their polarity during invagination (PubMed:7892198). Crumbs (crb) may be the intracellular signal (PubMed:7892198).</text>
</comment>
<comment type="catalytic activity">
    <reaction evidence="4">
        <text>L-tyrosyl-[protein] + ATP = O-phospho-L-tyrosyl-[protein] + ADP + H(+)</text>
        <dbReference type="Rhea" id="RHEA:10596"/>
        <dbReference type="Rhea" id="RHEA-COMP:10136"/>
        <dbReference type="Rhea" id="RHEA-COMP:20101"/>
        <dbReference type="ChEBI" id="CHEBI:15378"/>
        <dbReference type="ChEBI" id="CHEBI:30616"/>
        <dbReference type="ChEBI" id="CHEBI:46858"/>
        <dbReference type="ChEBI" id="CHEBI:61978"/>
        <dbReference type="ChEBI" id="CHEBI:456216"/>
        <dbReference type="EC" id="2.7.10.2"/>
    </reaction>
</comment>
<comment type="subunit">
    <text evidence="6">Interacts with drpr; this is required for the recruitment of drpr and glial cells to severed axons and for the phagocytosis of axonal debris by glial cells following axon injury.</text>
</comment>
<comment type="interaction">
    <interactant intactId="EBI-3403861">
        <id>Q24145</id>
    </interactant>
    <interactant intactId="EBI-107028">
        <id>Q9W0A0</id>
        <label>drpr</label>
    </interactant>
    <organismsDiffer>false</organismsDiffer>
    <experiments>3</experiments>
</comment>
<comment type="subcellular location">
    <subcellularLocation>
        <location evidence="8">Cytoplasm</location>
    </subcellularLocation>
    <text>Apical expression in cephalic furrow and tracheal cells. Limited to luminal surface and absent from the basal surface.</text>
</comment>
<comment type="tissue specificity">
    <text evidence="8">Gastrulation embryos show expression in ectodermal cells along the cephalic furrow and ventral midline. Proctodeum, stomodeum and their derived structures (foregut, atrium, pharynx, esophagus and hindgut) continue to show expression from stage 8-9 to late embryos. Other ectodermally derived structures (frontal sac, salivary gland and labium) and developing tracheal system also show expression.</text>
</comment>
<comment type="developmental stage">
    <text evidence="8">Embryos only.</text>
</comment>
<comment type="disruption phenotype">
    <text evidence="6 7">Strong reduction in the number of macrophages recruited to wound sites (PubMed:26028435). RNAi-mediated knockdown in glial cells abolishes a number of events which normally occur following axon injury including drpr localization at severed axons, glial recruitment to severed axons, up-regulation of drpr in glial cells and clearance of axonal debris from the central nervous system (PubMed:18432193).</text>
</comment>
<comment type="similarity">
    <text evidence="2">Belongs to the protein kinase superfamily. Tyr protein kinase family.</text>
</comment>
<name>SHARK_DROME</name>
<proteinExistence type="evidence at protein level"/>
<protein>
    <recommendedName>
        <fullName evidence="10">Tyrosine-protein kinase Shark</fullName>
        <ecNumber>2.7.10.2</ecNumber>
    </recommendedName>
</protein>
<sequence>MSRDSDPMKWYHGNLSREAADELLKQGYEDGTFLVRESSTAAGDFVLSLLCQGEVCHYQVRRHGGEDAFFSIDDKVQTKILHGLDTLVDYYQQAANGLPTKLTVPLIRDLPPHNTRSHGVTNLLHRATSKNESKVVFELLKCGYRNFDAKNQDGQTALHLAALHSDEDILKHLLNAKVQVNSSDSFGCQPLHYAARSKPASFIRTLISAQANVQGRNIDNGYVPLHEAAKHGNLEAVQELLLAEAPPLPRTSSGEFPFDLAKEAGQTAVEEFLLNYKLPPANTTRDQWYHGTLTREEAVAILKKHAKELLAKQPEVDTSGCFLVRYSESPAASGLVLTLLCDQVVKNFRISQADLYQNGNKVQSGGSKFLYIDDGPYWPSVEHLIAHFMRFSYGLPVSLKYPVPPQPKPEVPSFATIPRSNMKPKAASPATPPTPVSPHSHHQHPHVPALTITKKKQKENSSSMFNTLRLTSPKKALFDMNSLRKNKSKGKRSDSESSVSGSLAGTEQELQAAAPMLKSLSFSTEFSTFNADGVTGSGAAAAGEVYNVPRNNTPIEIDLPPIAQKTEAEVEYFTKSDVAIERERAGQWIGNGYQPTMDVLSLLDQQIKAPAVARLNSLGPNASTESEMASYLHRKCSGTPSTPSATEVEAAKLRFFIEPEKLVLDREIGHGEFGSVHSGWLLRKSGAGEESRLEVAIKMLSDEHSNKQEFLREASVMMRLEHKCIVRLIGIAKGEMLMMVQELAPLGSMLQYILDHGHEITANAELKVWASQIACGMHYLESQHFVHRDLAARNILLTARHQAKISDFGMSRSLRPGSTEYQFTQGGRWPIRWYAPESFNLGIFSHASDVWSFGVTIWEMFSLGAPPYGEISNVDAIKLVDSGERLPQPNLCPAYIYAVMQSCWKERPKDRPTFVYLTEFFARDPDYQNLPELVQTVHI</sequence>
<keyword id="KW-0040">ANK repeat</keyword>
<keyword id="KW-0067">ATP-binding</keyword>
<keyword id="KW-0963">Cytoplasm</keyword>
<keyword id="KW-0418">Kinase</keyword>
<keyword id="KW-0547">Nucleotide-binding</keyword>
<keyword id="KW-0597">Phosphoprotein</keyword>
<keyword id="KW-1185">Reference proteome</keyword>
<keyword id="KW-0677">Repeat</keyword>
<keyword id="KW-0727">SH2 domain</keyword>
<keyword id="KW-0808">Transferase</keyword>
<keyword id="KW-0829">Tyrosine-protein kinase</keyword>
<evidence type="ECO:0000255" key="1"/>
<evidence type="ECO:0000255" key="2">
    <source>
        <dbReference type="PROSITE-ProRule" id="PRU00159"/>
    </source>
</evidence>
<evidence type="ECO:0000255" key="3">
    <source>
        <dbReference type="PROSITE-ProRule" id="PRU00191"/>
    </source>
</evidence>
<evidence type="ECO:0000255" key="4">
    <source>
        <dbReference type="PROSITE-ProRule" id="PRU10028"/>
    </source>
</evidence>
<evidence type="ECO:0000256" key="5">
    <source>
        <dbReference type="SAM" id="MobiDB-lite"/>
    </source>
</evidence>
<evidence type="ECO:0000269" key="6">
    <source>
    </source>
</evidence>
<evidence type="ECO:0000269" key="7">
    <source>
    </source>
</evidence>
<evidence type="ECO:0000269" key="8">
    <source>
    </source>
</evidence>
<evidence type="ECO:0000303" key="9">
    <source>
    </source>
</evidence>
<evidence type="ECO:0000303" key="10">
    <source>
    </source>
</evidence>
<evidence type="ECO:0000305" key="11"/>
<evidence type="ECO:0000312" key="12">
    <source>
        <dbReference type="EMBL" id="AAF58044.1"/>
    </source>
</evidence>
<evidence type="ECO:0000312" key="13">
    <source>
        <dbReference type="FlyBase" id="FBgn0015295"/>
    </source>
</evidence>
<reference evidence="11" key="1">
    <citation type="journal article" date="1995" name="Proc. Natl. Acad. Sci. U.S.A.">
        <title>Shark, a Src homology 2, ankyrin repeat, tyrosine kinase, is expressed on the apical surfaces of ectodermal epithelia.</title>
        <authorList>
            <person name="Ferrante A.W. Jr."/>
            <person name="Reinke R."/>
            <person name="Stanley E.R."/>
        </authorList>
    </citation>
    <scope>NUCLEOTIDE SEQUENCE [MRNA]</scope>
    <scope>FUNCTION</scope>
    <scope>SUBCELLULAR LOCATION</scope>
    <scope>TISSUE SPECIFICITY</scope>
    <scope>DEVELOPMENTAL STAGE</scope>
    <source>
        <tissue>Embryo</tissue>
    </source>
</reference>
<reference evidence="11" key="2">
    <citation type="journal article" date="2000" name="Science">
        <title>The genome sequence of Drosophila melanogaster.</title>
        <authorList>
            <person name="Adams M.D."/>
            <person name="Celniker S.E."/>
            <person name="Holt R.A."/>
            <person name="Evans C.A."/>
            <person name="Gocayne J.D."/>
            <person name="Amanatides P.G."/>
            <person name="Scherer S.E."/>
            <person name="Li P.W."/>
            <person name="Hoskins R.A."/>
            <person name="Galle R.F."/>
            <person name="George R.A."/>
            <person name="Lewis S.E."/>
            <person name="Richards S."/>
            <person name="Ashburner M."/>
            <person name="Henderson S.N."/>
            <person name="Sutton G.G."/>
            <person name="Wortman J.R."/>
            <person name="Yandell M.D."/>
            <person name="Zhang Q."/>
            <person name="Chen L.X."/>
            <person name="Brandon R.C."/>
            <person name="Rogers Y.-H.C."/>
            <person name="Blazej R.G."/>
            <person name="Champe M."/>
            <person name="Pfeiffer B.D."/>
            <person name="Wan K.H."/>
            <person name="Doyle C."/>
            <person name="Baxter E.G."/>
            <person name="Helt G."/>
            <person name="Nelson C.R."/>
            <person name="Miklos G.L.G."/>
            <person name="Abril J.F."/>
            <person name="Agbayani A."/>
            <person name="An H.-J."/>
            <person name="Andrews-Pfannkoch C."/>
            <person name="Baldwin D."/>
            <person name="Ballew R.M."/>
            <person name="Basu A."/>
            <person name="Baxendale J."/>
            <person name="Bayraktaroglu L."/>
            <person name="Beasley E.M."/>
            <person name="Beeson K.Y."/>
            <person name="Benos P.V."/>
            <person name="Berman B.P."/>
            <person name="Bhandari D."/>
            <person name="Bolshakov S."/>
            <person name="Borkova D."/>
            <person name="Botchan M.R."/>
            <person name="Bouck J."/>
            <person name="Brokstein P."/>
            <person name="Brottier P."/>
            <person name="Burtis K.C."/>
            <person name="Busam D.A."/>
            <person name="Butler H."/>
            <person name="Cadieu E."/>
            <person name="Center A."/>
            <person name="Chandra I."/>
            <person name="Cherry J.M."/>
            <person name="Cawley S."/>
            <person name="Dahlke C."/>
            <person name="Davenport L.B."/>
            <person name="Davies P."/>
            <person name="de Pablos B."/>
            <person name="Delcher A."/>
            <person name="Deng Z."/>
            <person name="Mays A.D."/>
            <person name="Dew I."/>
            <person name="Dietz S.M."/>
            <person name="Dodson K."/>
            <person name="Doup L.E."/>
            <person name="Downes M."/>
            <person name="Dugan-Rocha S."/>
            <person name="Dunkov B.C."/>
            <person name="Dunn P."/>
            <person name="Durbin K.J."/>
            <person name="Evangelista C.C."/>
            <person name="Ferraz C."/>
            <person name="Ferriera S."/>
            <person name="Fleischmann W."/>
            <person name="Fosler C."/>
            <person name="Gabrielian A.E."/>
            <person name="Garg N.S."/>
            <person name="Gelbart W.M."/>
            <person name="Glasser K."/>
            <person name="Glodek A."/>
            <person name="Gong F."/>
            <person name="Gorrell J.H."/>
            <person name="Gu Z."/>
            <person name="Guan P."/>
            <person name="Harris M."/>
            <person name="Harris N.L."/>
            <person name="Harvey D.A."/>
            <person name="Heiman T.J."/>
            <person name="Hernandez J.R."/>
            <person name="Houck J."/>
            <person name="Hostin D."/>
            <person name="Houston K.A."/>
            <person name="Howland T.J."/>
            <person name="Wei M.-H."/>
            <person name="Ibegwam C."/>
            <person name="Jalali M."/>
            <person name="Kalush F."/>
            <person name="Karpen G.H."/>
            <person name="Ke Z."/>
            <person name="Kennison J.A."/>
            <person name="Ketchum K.A."/>
            <person name="Kimmel B.E."/>
            <person name="Kodira C.D."/>
            <person name="Kraft C.L."/>
            <person name="Kravitz S."/>
            <person name="Kulp D."/>
            <person name="Lai Z."/>
            <person name="Lasko P."/>
            <person name="Lei Y."/>
            <person name="Levitsky A.A."/>
            <person name="Li J.H."/>
            <person name="Li Z."/>
            <person name="Liang Y."/>
            <person name="Lin X."/>
            <person name="Liu X."/>
            <person name="Mattei B."/>
            <person name="McIntosh T.C."/>
            <person name="McLeod M.P."/>
            <person name="McPherson D."/>
            <person name="Merkulov G."/>
            <person name="Milshina N.V."/>
            <person name="Mobarry C."/>
            <person name="Morris J."/>
            <person name="Moshrefi A."/>
            <person name="Mount S.M."/>
            <person name="Moy M."/>
            <person name="Murphy B."/>
            <person name="Murphy L."/>
            <person name="Muzny D.M."/>
            <person name="Nelson D.L."/>
            <person name="Nelson D.R."/>
            <person name="Nelson K.A."/>
            <person name="Nixon K."/>
            <person name="Nusskern D.R."/>
            <person name="Pacleb J.M."/>
            <person name="Palazzolo M."/>
            <person name="Pittman G.S."/>
            <person name="Pan S."/>
            <person name="Pollard J."/>
            <person name="Puri V."/>
            <person name="Reese M.G."/>
            <person name="Reinert K."/>
            <person name="Remington K."/>
            <person name="Saunders R.D.C."/>
            <person name="Scheeler F."/>
            <person name="Shen H."/>
            <person name="Shue B.C."/>
            <person name="Siden-Kiamos I."/>
            <person name="Simpson M."/>
            <person name="Skupski M.P."/>
            <person name="Smith T.J."/>
            <person name="Spier E."/>
            <person name="Spradling A.C."/>
            <person name="Stapleton M."/>
            <person name="Strong R."/>
            <person name="Sun E."/>
            <person name="Svirskas R."/>
            <person name="Tector C."/>
            <person name="Turner R."/>
            <person name="Venter E."/>
            <person name="Wang A.H."/>
            <person name="Wang X."/>
            <person name="Wang Z.-Y."/>
            <person name="Wassarman D.A."/>
            <person name="Weinstock G.M."/>
            <person name="Weissenbach J."/>
            <person name="Williams S.M."/>
            <person name="Woodage T."/>
            <person name="Worley K.C."/>
            <person name="Wu D."/>
            <person name="Yang S."/>
            <person name="Yao Q.A."/>
            <person name="Ye J."/>
            <person name="Yeh R.-F."/>
            <person name="Zaveri J.S."/>
            <person name="Zhan M."/>
            <person name="Zhang G."/>
            <person name="Zhao Q."/>
            <person name="Zheng L."/>
            <person name="Zheng X.H."/>
            <person name="Zhong F.N."/>
            <person name="Zhong W."/>
            <person name="Zhou X."/>
            <person name="Zhu S.C."/>
            <person name="Zhu X."/>
            <person name="Smith H.O."/>
            <person name="Gibbs R.A."/>
            <person name="Myers E.W."/>
            <person name="Rubin G.M."/>
            <person name="Venter J.C."/>
        </authorList>
    </citation>
    <scope>NUCLEOTIDE SEQUENCE [LARGE SCALE GENOMIC DNA]</scope>
    <source>
        <strain>Berkeley</strain>
    </source>
</reference>
<reference key="3">
    <citation type="journal article" date="2002" name="Genome Biol.">
        <title>Annotation of the Drosophila melanogaster euchromatic genome: a systematic review.</title>
        <authorList>
            <person name="Misra S."/>
            <person name="Crosby M.A."/>
            <person name="Mungall C.J."/>
            <person name="Matthews B.B."/>
            <person name="Campbell K.S."/>
            <person name="Hradecky P."/>
            <person name="Huang Y."/>
            <person name="Kaminker J.S."/>
            <person name="Millburn G.H."/>
            <person name="Prochnik S.E."/>
            <person name="Smith C.D."/>
            <person name="Tupy J.L."/>
            <person name="Whitfield E.J."/>
            <person name="Bayraktaroglu L."/>
            <person name="Berman B.P."/>
            <person name="Bettencourt B.R."/>
            <person name="Celniker S.E."/>
            <person name="de Grey A.D.N.J."/>
            <person name="Drysdale R.A."/>
            <person name="Harris N.L."/>
            <person name="Richter J."/>
            <person name="Russo S."/>
            <person name="Schroeder A.J."/>
            <person name="Shu S.Q."/>
            <person name="Stapleton M."/>
            <person name="Yamada C."/>
            <person name="Ashburner M."/>
            <person name="Gelbart W.M."/>
            <person name="Rubin G.M."/>
            <person name="Lewis S.E."/>
        </authorList>
    </citation>
    <scope>GENOME REANNOTATION</scope>
    <source>
        <strain>Berkeley</strain>
    </source>
</reference>
<reference key="4">
    <citation type="journal article" date="2002" name="Genome Biol.">
        <title>A Drosophila full-length cDNA resource.</title>
        <authorList>
            <person name="Stapleton M."/>
            <person name="Carlson J.W."/>
            <person name="Brokstein P."/>
            <person name="Yu C."/>
            <person name="Champe M."/>
            <person name="George R.A."/>
            <person name="Guarin H."/>
            <person name="Kronmiller B."/>
            <person name="Pacleb J.M."/>
            <person name="Park S."/>
            <person name="Wan K.H."/>
            <person name="Rubin G.M."/>
            <person name="Celniker S.E."/>
        </authorList>
    </citation>
    <scope>NUCLEOTIDE SEQUENCE [LARGE SCALE MRNA]</scope>
    <source>
        <strain>Berkeley</strain>
        <tissue>Embryo</tissue>
    </source>
</reference>
<reference evidence="11" key="5">
    <citation type="journal article" date="1991" name="FEBS Lett.">
        <title>Identification of seven novel protein-tyrosine kinase genes of Drosophila by the polymerase chain reaction.</title>
        <authorList>
            <person name="Shishido E."/>
            <person name="Emori Y."/>
            <person name="Saigo K."/>
        </authorList>
    </citation>
    <scope>NUCLEOTIDE SEQUENCE [GENOMIC DNA] OF 793-849</scope>
</reference>
<reference key="6">
    <citation type="journal article" date="2008" name="Nature">
        <title>Draper-dependent glial phagocytic activity is mediated by Src and Syk family kinase signalling.</title>
        <authorList>
            <person name="Ziegenfuss J.S."/>
            <person name="Biswas R."/>
            <person name="Avery M.A."/>
            <person name="Hong K."/>
            <person name="Sheehan A.E."/>
            <person name="Yeung Y.G."/>
            <person name="Stanley E.R."/>
            <person name="Freeman M.R."/>
        </authorList>
    </citation>
    <scope>FUNCTION</scope>
    <scope>INTERACTION WITH DRPR</scope>
    <scope>DISRUPTION PHENOTYPE</scope>
    <scope>MUTAGENESIS OF LYS-698</scope>
</reference>
<reference key="7">
    <citation type="journal article" date="2015" name="Curr. Biol.">
        <title>Draper/CED-1 mediates an ancient damage response to control inflammatory blood cell migration in vivo.</title>
        <authorList>
            <person name="Evans I.R."/>
            <person name="Rodrigues F.S."/>
            <person name="Armitage E.L."/>
            <person name="Wood W."/>
        </authorList>
    </citation>
    <scope>FUNCTION</scope>
    <scope>DISRUPTION PHENOTYPE</scope>
</reference>
<gene>
    <name evidence="10 13" type="primary">Shark</name>
    <name evidence="9" type="synonym">Tk7</name>
    <name evidence="13" type="ORF">CG18247</name>
</gene>
<accession>Q24145</accession>
<accession>Q26299</accession>
<accession>Q9V7K5</accession>
<feature type="chain" id="PRO_0000088137" description="Tyrosine-protein kinase Shark">
    <location>
        <begin position="1"/>
        <end position="939"/>
    </location>
</feature>
<feature type="domain" description="SH2 1" evidence="3 11">
    <location>
        <begin position="10"/>
        <end position="106"/>
    </location>
</feature>
<feature type="repeat" description="ANK 1" evidence="11">
    <location>
        <begin position="153"/>
        <end position="185"/>
    </location>
</feature>
<feature type="repeat" description="ANK 2" evidence="11">
    <location>
        <begin position="186"/>
        <end position="218"/>
    </location>
</feature>
<feature type="repeat" description="ANK 3" evidence="11">
    <location>
        <begin position="220"/>
        <end position="252"/>
    </location>
</feature>
<feature type="domain" description="SH2 2" evidence="3 11">
    <location>
        <begin position="288"/>
        <end position="403"/>
    </location>
</feature>
<feature type="domain" description="Protein kinase" evidence="2">
    <location>
        <begin position="662"/>
        <end position="921"/>
    </location>
</feature>
<feature type="region of interest" description="Disordered" evidence="5">
    <location>
        <begin position="410"/>
        <end position="446"/>
    </location>
</feature>
<feature type="region of interest" description="Disordered" evidence="5">
    <location>
        <begin position="476"/>
        <end position="505"/>
    </location>
</feature>
<feature type="compositionally biased region" description="Polar residues" evidence="5">
    <location>
        <begin position="496"/>
        <end position="505"/>
    </location>
</feature>
<feature type="active site" description="Proton acceptor" evidence="2 4">
    <location>
        <position position="789"/>
    </location>
</feature>
<feature type="binding site" evidence="2">
    <location>
        <begin position="668"/>
        <end position="676"/>
    </location>
    <ligand>
        <name>ATP</name>
        <dbReference type="ChEBI" id="CHEBI:30616"/>
    </ligand>
</feature>
<feature type="binding site" evidence="2">
    <location>
        <position position="698"/>
    </location>
    <ligand>
        <name>ATP</name>
        <dbReference type="ChEBI" id="CHEBI:30616"/>
    </ligand>
</feature>
<feature type="modified residue" description="Phosphotyrosine" evidence="1">
    <location>
        <position position="927"/>
    </location>
</feature>
<feature type="mutagenesis site" description="Kinase-dead. No effect on interaction with drpr." evidence="6">
    <original>K</original>
    <variation>R</variation>
    <location>
        <position position="698"/>
    </location>
</feature>
<feature type="sequence conflict" description="In Ref. 1; AAA79851." evidence="11" ref="1">
    <original>A</original>
    <variation>V</variation>
    <location>
        <position position="19"/>
    </location>
</feature>
<feature type="sequence conflict" description="In Ref. 1; AAA79851." evidence="11" ref="1">
    <original>S</original>
    <variation>R</variation>
    <location>
        <position position="39"/>
    </location>
</feature>
<feature type="sequence conflict" description="In Ref. 1; AAA79851." evidence="11" ref="1">
    <original>L</original>
    <variation>F</variation>
    <location>
        <position position="50"/>
    </location>
</feature>
<feature type="sequence conflict" description="In Ref. 1; AAA79851." evidence="11" ref="1">
    <original>D</original>
    <variation>E</variation>
    <location>
        <position position="85"/>
    </location>
</feature>
<feature type="sequence conflict" description="In Ref. 1; AAA79851." evidence="11" ref="1">
    <original>S</original>
    <variation>T</variation>
    <location>
        <position position="129"/>
    </location>
</feature>
<feature type="sequence conflict" description="In Ref. 1; AAA79851." evidence="11" ref="1">
    <original>P</original>
    <variation>T</variation>
    <location>
        <position position="199"/>
    </location>
</feature>
<feature type="sequence conflict" description="In Ref. 1; AAA79851." evidence="11" ref="1">
    <original>C</original>
    <variation>S</variation>
    <location>
        <position position="341"/>
    </location>
</feature>
<feature type="sequence conflict" description="In Ref. 1; AAA79851." evidence="11" ref="1">
    <original>GT</original>
    <variation>RA</variation>
    <location>
        <begin position="505"/>
        <end position="506"/>
    </location>
</feature>
<feature type="sequence conflict" description="In Ref. 1; AAA79851." evidence="11" ref="1">
    <original>M</original>
    <variation>V</variation>
    <location>
        <position position="597"/>
    </location>
</feature>
<feature type="sequence conflict" description="In Ref. 1; AAA79851." evidence="11" ref="1">
    <original>A</original>
    <variation>P</variation>
    <location>
        <position position="611"/>
    </location>
</feature>
<feature type="sequence conflict" description="In Ref. 1; AAA79851." evidence="11" ref="1">
    <original>A</original>
    <variation>S</variation>
    <location>
        <position position="732"/>
    </location>
</feature>
<feature type="sequence conflict" description="In Ref. 1; AAA79851." evidence="11" ref="1">
    <original>A</original>
    <variation>P</variation>
    <location>
        <position position="898"/>
    </location>
</feature>
<feature type="sequence conflict" description="In Ref. 1; AAA79851." evidence="11" ref="1">
    <original>QTVHI</original>
    <variation>KRFTFNPVSIFHFFRC</variation>
    <location>
        <begin position="935"/>
        <end position="939"/>
    </location>
</feature>